<name>PHNC_YERPS</name>
<feature type="chain" id="PRO_0000092740" description="Phosphonates import ATP-binding protein PhnC">
    <location>
        <begin position="1"/>
        <end position="278"/>
    </location>
</feature>
<feature type="domain" description="ABC transporter" evidence="1">
    <location>
        <begin position="25"/>
        <end position="273"/>
    </location>
</feature>
<feature type="binding site" evidence="1">
    <location>
        <begin position="58"/>
        <end position="65"/>
    </location>
    <ligand>
        <name>ATP</name>
        <dbReference type="ChEBI" id="CHEBI:30616"/>
    </ligand>
</feature>
<evidence type="ECO:0000255" key="1">
    <source>
        <dbReference type="HAMAP-Rule" id="MF_01713"/>
    </source>
</evidence>
<keyword id="KW-0067">ATP-binding</keyword>
<keyword id="KW-0997">Cell inner membrane</keyword>
<keyword id="KW-1003">Cell membrane</keyword>
<keyword id="KW-0472">Membrane</keyword>
<keyword id="KW-0547">Nucleotide-binding</keyword>
<keyword id="KW-0918">Phosphonate transport</keyword>
<keyword id="KW-1278">Translocase</keyword>
<keyword id="KW-0813">Transport</keyword>
<proteinExistence type="inferred from homology"/>
<comment type="function">
    <text evidence="1">Part of the ABC transporter complex PhnCDE involved in phosphonates import. Responsible for energy coupling to the transport system.</text>
</comment>
<comment type="catalytic activity">
    <reaction evidence="1">
        <text>phosphonate(out) + ATP + H2O = phosphonate(in) + ADP + phosphate + H(+)</text>
        <dbReference type="Rhea" id="RHEA:18065"/>
        <dbReference type="ChEBI" id="CHEBI:15377"/>
        <dbReference type="ChEBI" id="CHEBI:15378"/>
        <dbReference type="ChEBI" id="CHEBI:16215"/>
        <dbReference type="ChEBI" id="CHEBI:30616"/>
        <dbReference type="ChEBI" id="CHEBI:43474"/>
        <dbReference type="ChEBI" id="CHEBI:456216"/>
        <dbReference type="EC" id="7.3.2.2"/>
    </reaction>
</comment>
<comment type="subunit">
    <text evidence="1">The complex is composed of two ATP-binding proteins (PhnC), two transmembrane proteins (PhnE) and a solute-binding protein (PhnD).</text>
</comment>
<comment type="subcellular location">
    <subcellularLocation>
        <location evidence="1">Cell inner membrane</location>
        <topology evidence="1">Peripheral membrane protein</topology>
    </subcellularLocation>
</comment>
<comment type="similarity">
    <text evidence="1">Belongs to the ABC transporter superfamily. Phosphonates importer (TC 3.A.1.9.1) family.</text>
</comment>
<accession>Q66D26</accession>
<organism>
    <name type="scientific">Yersinia pseudotuberculosis serotype I (strain IP32953)</name>
    <dbReference type="NCBI Taxonomy" id="273123"/>
    <lineage>
        <taxon>Bacteria</taxon>
        <taxon>Pseudomonadati</taxon>
        <taxon>Pseudomonadota</taxon>
        <taxon>Gammaproteobacteria</taxon>
        <taxon>Enterobacterales</taxon>
        <taxon>Yersiniaceae</taxon>
        <taxon>Yersinia</taxon>
    </lineage>
</organism>
<gene>
    <name evidence="1" type="primary">phnC</name>
    <name type="ordered locus">YPTB1223</name>
</gene>
<sequence length="278" mass="30989">MGQALRKLTAADYPVVVQEPRKKVLAVKGLVKAYKSQHRVLDNINFELHAGEFVAIIGRSGAGKSTLLHILNGTIPTSAGEIINYHENGDTQNIAALTTKQMRKWRAKCGMIFQDFCLVPRLDVITNVLLGRLSYTSTLKSFFKLFSEQDQARAIELLQWLNMLPHALQRAENLSGGQMQRVAICRAMMQNPKILLADEPVASLDPKNTTRIMNTLQKISENDIAVIVNLHSVDLVKDYCTRVIGIAHGRIIFDGPPSMLNDSIIQDIYSDESAELLH</sequence>
<reference key="1">
    <citation type="journal article" date="2004" name="Proc. Natl. Acad. Sci. U.S.A.">
        <title>Insights into the evolution of Yersinia pestis through whole-genome comparison with Yersinia pseudotuberculosis.</title>
        <authorList>
            <person name="Chain P.S.G."/>
            <person name="Carniel E."/>
            <person name="Larimer F.W."/>
            <person name="Lamerdin J."/>
            <person name="Stoutland P.O."/>
            <person name="Regala W.M."/>
            <person name="Georgescu A.M."/>
            <person name="Vergez L.M."/>
            <person name="Land M.L."/>
            <person name="Motin V.L."/>
            <person name="Brubaker R.R."/>
            <person name="Fowler J."/>
            <person name="Hinnebusch J."/>
            <person name="Marceau M."/>
            <person name="Medigue C."/>
            <person name="Simonet M."/>
            <person name="Chenal-Francisque V."/>
            <person name="Souza B."/>
            <person name="Dacheux D."/>
            <person name="Elliott J.M."/>
            <person name="Derbise A."/>
            <person name="Hauser L.J."/>
            <person name="Garcia E."/>
        </authorList>
    </citation>
    <scope>NUCLEOTIDE SEQUENCE [LARGE SCALE GENOMIC DNA]</scope>
    <source>
        <strain>IP32953</strain>
    </source>
</reference>
<dbReference type="EC" id="7.3.2.2" evidence="1"/>
<dbReference type="EMBL" id="BX936398">
    <property type="protein sequence ID" value="CAH20463.1"/>
    <property type="molecule type" value="Genomic_DNA"/>
</dbReference>
<dbReference type="RefSeq" id="WP_002210787.1">
    <property type="nucleotide sequence ID" value="NZ_CP009712.1"/>
</dbReference>
<dbReference type="SMR" id="Q66D26"/>
<dbReference type="GeneID" id="57977322"/>
<dbReference type="KEGG" id="ypo:BZ17_1303"/>
<dbReference type="KEGG" id="yps:YPTB1223"/>
<dbReference type="PATRIC" id="fig|273123.14.peg.1391"/>
<dbReference type="Proteomes" id="UP000001011">
    <property type="component" value="Chromosome"/>
</dbReference>
<dbReference type="GO" id="GO:0005886">
    <property type="term" value="C:plasma membrane"/>
    <property type="evidence" value="ECO:0007669"/>
    <property type="project" value="UniProtKB-SubCell"/>
</dbReference>
<dbReference type="GO" id="GO:0015416">
    <property type="term" value="F:ABC-type phosphonate transporter activity"/>
    <property type="evidence" value="ECO:0007669"/>
    <property type="project" value="UniProtKB-EC"/>
</dbReference>
<dbReference type="GO" id="GO:0005524">
    <property type="term" value="F:ATP binding"/>
    <property type="evidence" value="ECO:0007669"/>
    <property type="project" value="UniProtKB-KW"/>
</dbReference>
<dbReference type="GO" id="GO:0016887">
    <property type="term" value="F:ATP hydrolysis activity"/>
    <property type="evidence" value="ECO:0007669"/>
    <property type="project" value="InterPro"/>
</dbReference>
<dbReference type="CDD" id="cd03256">
    <property type="entry name" value="ABC_PhnC_transporter"/>
    <property type="match status" value="1"/>
</dbReference>
<dbReference type="Gene3D" id="3.40.50.300">
    <property type="entry name" value="P-loop containing nucleotide triphosphate hydrolases"/>
    <property type="match status" value="1"/>
</dbReference>
<dbReference type="InterPro" id="IPR003593">
    <property type="entry name" value="AAA+_ATPase"/>
</dbReference>
<dbReference type="InterPro" id="IPR003439">
    <property type="entry name" value="ABC_transporter-like_ATP-bd"/>
</dbReference>
<dbReference type="InterPro" id="IPR017871">
    <property type="entry name" value="ABC_transporter-like_CS"/>
</dbReference>
<dbReference type="InterPro" id="IPR012693">
    <property type="entry name" value="ABC_transpr_PhnC"/>
</dbReference>
<dbReference type="InterPro" id="IPR050086">
    <property type="entry name" value="MetN_ABC_transporter-like"/>
</dbReference>
<dbReference type="InterPro" id="IPR027417">
    <property type="entry name" value="P-loop_NTPase"/>
</dbReference>
<dbReference type="NCBIfam" id="TIGR02315">
    <property type="entry name" value="ABC_phnC"/>
    <property type="match status" value="1"/>
</dbReference>
<dbReference type="PANTHER" id="PTHR43166">
    <property type="entry name" value="AMINO ACID IMPORT ATP-BINDING PROTEIN"/>
    <property type="match status" value="1"/>
</dbReference>
<dbReference type="PANTHER" id="PTHR43166:SF6">
    <property type="entry name" value="PHOSPHONATES IMPORT ATP-BINDING PROTEIN PHNC"/>
    <property type="match status" value="1"/>
</dbReference>
<dbReference type="Pfam" id="PF00005">
    <property type="entry name" value="ABC_tran"/>
    <property type="match status" value="1"/>
</dbReference>
<dbReference type="SMART" id="SM00382">
    <property type="entry name" value="AAA"/>
    <property type="match status" value="1"/>
</dbReference>
<dbReference type="SUPFAM" id="SSF52540">
    <property type="entry name" value="P-loop containing nucleoside triphosphate hydrolases"/>
    <property type="match status" value="1"/>
</dbReference>
<dbReference type="PROSITE" id="PS00211">
    <property type="entry name" value="ABC_TRANSPORTER_1"/>
    <property type="match status" value="1"/>
</dbReference>
<dbReference type="PROSITE" id="PS50893">
    <property type="entry name" value="ABC_TRANSPORTER_2"/>
    <property type="match status" value="1"/>
</dbReference>
<dbReference type="PROSITE" id="PS51249">
    <property type="entry name" value="PHNC"/>
    <property type="match status" value="1"/>
</dbReference>
<protein>
    <recommendedName>
        <fullName evidence="1">Phosphonates import ATP-binding protein PhnC</fullName>
        <ecNumber evidence="1">7.3.2.2</ecNumber>
    </recommendedName>
</protein>